<organism>
    <name type="scientific">Clostridium botulinum (strain Alaska E43 / Type E3)</name>
    <dbReference type="NCBI Taxonomy" id="508767"/>
    <lineage>
        <taxon>Bacteria</taxon>
        <taxon>Bacillati</taxon>
        <taxon>Bacillota</taxon>
        <taxon>Clostridia</taxon>
        <taxon>Eubacteriales</taxon>
        <taxon>Clostridiaceae</taxon>
        <taxon>Clostridium</taxon>
    </lineage>
</organism>
<accession>B2V4B5</accession>
<dbReference type="EC" id="2.1.1.192" evidence="1"/>
<dbReference type="EMBL" id="CP001078">
    <property type="protein sequence ID" value="ACD53902.1"/>
    <property type="molecule type" value="Genomic_DNA"/>
</dbReference>
<dbReference type="RefSeq" id="WP_003369449.1">
    <property type="nucleotide sequence ID" value="NC_010723.1"/>
</dbReference>
<dbReference type="SMR" id="B2V4B5"/>
<dbReference type="KEGG" id="cbt:CLH_1170"/>
<dbReference type="HOGENOM" id="CLU_029101_0_1_9"/>
<dbReference type="GO" id="GO:0005737">
    <property type="term" value="C:cytoplasm"/>
    <property type="evidence" value="ECO:0007669"/>
    <property type="project" value="UniProtKB-SubCell"/>
</dbReference>
<dbReference type="GO" id="GO:0051539">
    <property type="term" value="F:4 iron, 4 sulfur cluster binding"/>
    <property type="evidence" value="ECO:0007669"/>
    <property type="project" value="UniProtKB-UniRule"/>
</dbReference>
<dbReference type="GO" id="GO:0046872">
    <property type="term" value="F:metal ion binding"/>
    <property type="evidence" value="ECO:0007669"/>
    <property type="project" value="UniProtKB-KW"/>
</dbReference>
<dbReference type="GO" id="GO:0070040">
    <property type="term" value="F:rRNA (adenine(2503)-C2-)-methyltransferase activity"/>
    <property type="evidence" value="ECO:0007669"/>
    <property type="project" value="UniProtKB-UniRule"/>
</dbReference>
<dbReference type="GO" id="GO:0019843">
    <property type="term" value="F:rRNA binding"/>
    <property type="evidence" value="ECO:0007669"/>
    <property type="project" value="UniProtKB-UniRule"/>
</dbReference>
<dbReference type="GO" id="GO:0002935">
    <property type="term" value="F:tRNA (adenine(37)-C2)-methyltransferase activity"/>
    <property type="evidence" value="ECO:0007669"/>
    <property type="project" value="UniProtKB-UniRule"/>
</dbReference>
<dbReference type="GO" id="GO:0000049">
    <property type="term" value="F:tRNA binding"/>
    <property type="evidence" value="ECO:0007669"/>
    <property type="project" value="UniProtKB-UniRule"/>
</dbReference>
<dbReference type="GO" id="GO:0070475">
    <property type="term" value="P:rRNA base methylation"/>
    <property type="evidence" value="ECO:0007669"/>
    <property type="project" value="UniProtKB-UniRule"/>
</dbReference>
<dbReference type="GO" id="GO:0030488">
    <property type="term" value="P:tRNA methylation"/>
    <property type="evidence" value="ECO:0007669"/>
    <property type="project" value="UniProtKB-UniRule"/>
</dbReference>
<dbReference type="CDD" id="cd01335">
    <property type="entry name" value="Radical_SAM"/>
    <property type="match status" value="1"/>
</dbReference>
<dbReference type="FunFam" id="3.20.20.70:FF:000014">
    <property type="entry name" value="Probable dual-specificity RNA methyltransferase RlmN"/>
    <property type="match status" value="1"/>
</dbReference>
<dbReference type="Gene3D" id="1.10.150.530">
    <property type="match status" value="1"/>
</dbReference>
<dbReference type="Gene3D" id="3.20.20.70">
    <property type="entry name" value="Aldolase class I"/>
    <property type="match status" value="1"/>
</dbReference>
<dbReference type="HAMAP" id="MF_01849">
    <property type="entry name" value="RNA_methyltr_RlmN"/>
    <property type="match status" value="1"/>
</dbReference>
<dbReference type="InterPro" id="IPR013785">
    <property type="entry name" value="Aldolase_TIM"/>
</dbReference>
<dbReference type="InterPro" id="IPR040072">
    <property type="entry name" value="Methyltransferase_A"/>
</dbReference>
<dbReference type="InterPro" id="IPR048641">
    <property type="entry name" value="RlmN_N"/>
</dbReference>
<dbReference type="InterPro" id="IPR027492">
    <property type="entry name" value="RNA_MTrfase_RlmN"/>
</dbReference>
<dbReference type="InterPro" id="IPR004383">
    <property type="entry name" value="rRNA_lsu_MTrfase_RlmN/Cfr"/>
</dbReference>
<dbReference type="InterPro" id="IPR007197">
    <property type="entry name" value="rSAM"/>
</dbReference>
<dbReference type="NCBIfam" id="TIGR00048">
    <property type="entry name" value="rRNA_mod_RlmN"/>
    <property type="match status" value="1"/>
</dbReference>
<dbReference type="PANTHER" id="PTHR30544">
    <property type="entry name" value="23S RRNA METHYLTRANSFERASE"/>
    <property type="match status" value="1"/>
</dbReference>
<dbReference type="PANTHER" id="PTHR30544:SF5">
    <property type="entry name" value="RADICAL SAM CORE DOMAIN-CONTAINING PROTEIN"/>
    <property type="match status" value="1"/>
</dbReference>
<dbReference type="Pfam" id="PF04055">
    <property type="entry name" value="Radical_SAM"/>
    <property type="match status" value="1"/>
</dbReference>
<dbReference type="Pfam" id="PF21016">
    <property type="entry name" value="RlmN_N"/>
    <property type="match status" value="1"/>
</dbReference>
<dbReference type="PIRSF" id="PIRSF006004">
    <property type="entry name" value="CHP00048"/>
    <property type="match status" value="1"/>
</dbReference>
<dbReference type="SFLD" id="SFLDF00275">
    <property type="entry name" value="adenosine_C2_methyltransferase"/>
    <property type="match status" value="1"/>
</dbReference>
<dbReference type="SFLD" id="SFLDS00029">
    <property type="entry name" value="Radical_SAM"/>
    <property type="match status" value="1"/>
</dbReference>
<dbReference type="SUPFAM" id="SSF102114">
    <property type="entry name" value="Radical SAM enzymes"/>
    <property type="match status" value="1"/>
</dbReference>
<dbReference type="PROSITE" id="PS51918">
    <property type="entry name" value="RADICAL_SAM"/>
    <property type="match status" value="1"/>
</dbReference>
<proteinExistence type="inferred from homology"/>
<protein>
    <recommendedName>
        <fullName evidence="1">Probable dual-specificity RNA methyltransferase RlmN</fullName>
        <ecNumber evidence="1">2.1.1.192</ecNumber>
    </recommendedName>
    <alternativeName>
        <fullName evidence="1">23S rRNA (adenine(2503)-C(2))-methyltransferase</fullName>
    </alternativeName>
    <alternativeName>
        <fullName evidence="1">23S rRNA m2A2503 methyltransferase</fullName>
    </alternativeName>
    <alternativeName>
        <fullName evidence="1">Ribosomal RNA large subunit methyltransferase N</fullName>
    </alternativeName>
    <alternativeName>
        <fullName evidence="1">tRNA (adenine(37)-C(2))-methyltransferase</fullName>
    </alternativeName>
    <alternativeName>
        <fullName evidence="1">tRNA m2A37 methyltransferase</fullName>
    </alternativeName>
</protein>
<evidence type="ECO:0000255" key="1">
    <source>
        <dbReference type="HAMAP-Rule" id="MF_01849"/>
    </source>
</evidence>
<evidence type="ECO:0000255" key="2">
    <source>
        <dbReference type="PROSITE-ProRule" id="PRU01266"/>
    </source>
</evidence>
<feature type="chain" id="PRO_0000350112" description="Probable dual-specificity RNA methyltransferase RlmN">
    <location>
        <begin position="1"/>
        <end position="347"/>
    </location>
</feature>
<feature type="domain" description="Radical SAM core" evidence="2">
    <location>
        <begin position="96"/>
        <end position="326"/>
    </location>
</feature>
<feature type="active site" description="Proton acceptor" evidence="1">
    <location>
        <position position="90"/>
    </location>
</feature>
<feature type="active site" description="S-methylcysteine intermediate" evidence="1">
    <location>
        <position position="331"/>
    </location>
</feature>
<feature type="binding site" evidence="1">
    <location>
        <position position="110"/>
    </location>
    <ligand>
        <name>[4Fe-4S] cluster</name>
        <dbReference type="ChEBI" id="CHEBI:49883"/>
        <note>4Fe-4S-S-AdoMet</note>
    </ligand>
</feature>
<feature type="binding site" evidence="1">
    <location>
        <position position="114"/>
    </location>
    <ligand>
        <name>[4Fe-4S] cluster</name>
        <dbReference type="ChEBI" id="CHEBI:49883"/>
        <note>4Fe-4S-S-AdoMet</note>
    </ligand>
</feature>
<feature type="binding site" evidence="1">
    <location>
        <position position="117"/>
    </location>
    <ligand>
        <name>[4Fe-4S] cluster</name>
        <dbReference type="ChEBI" id="CHEBI:49883"/>
        <note>4Fe-4S-S-AdoMet</note>
    </ligand>
</feature>
<feature type="binding site" evidence="1">
    <location>
        <begin position="157"/>
        <end position="158"/>
    </location>
    <ligand>
        <name>S-adenosyl-L-methionine</name>
        <dbReference type="ChEBI" id="CHEBI:59789"/>
    </ligand>
</feature>
<feature type="binding site" evidence="1">
    <location>
        <position position="189"/>
    </location>
    <ligand>
        <name>S-adenosyl-L-methionine</name>
        <dbReference type="ChEBI" id="CHEBI:59789"/>
    </ligand>
</feature>
<feature type="binding site" evidence="1">
    <location>
        <begin position="212"/>
        <end position="214"/>
    </location>
    <ligand>
        <name>S-adenosyl-L-methionine</name>
        <dbReference type="ChEBI" id="CHEBI:59789"/>
    </ligand>
</feature>
<feature type="binding site" evidence="1">
    <location>
        <position position="288"/>
    </location>
    <ligand>
        <name>S-adenosyl-L-methionine</name>
        <dbReference type="ChEBI" id="CHEBI:59789"/>
    </ligand>
</feature>
<feature type="disulfide bond" description="(transient)" evidence="1">
    <location>
        <begin position="103"/>
        <end position="331"/>
    </location>
</feature>
<sequence>MKNILDYTLEELTLWMKENNESSFRAKQIMSWIYKDVRNFSDMRNMPKSLIAKLEENFEISLPEIEEIYKSELDGTEKFLFKFSDGNLIESVLMRYKHGNSICISTQIGCRMGCKFCASTIDGRIRNLTTGEILSQILVVQNYIGERISNVVLMGSGEPLDNYENVMKFLEVVSAEYGLNIGQRHITLSTCGIVPKIYELADKELSITLAISLHAFSDEKRKEIMPIANKYSIDEILNACKYFINKTKRRITFEYSLVKDVNDSKEDARALGKLLKGMLCHVNLIPVNEIKERTFKRSSKETIQDFANILSNLGIEVTVRREMGSDINAACGQLRRSYIKTQETRGE</sequence>
<keyword id="KW-0004">4Fe-4S</keyword>
<keyword id="KW-0963">Cytoplasm</keyword>
<keyword id="KW-1015">Disulfide bond</keyword>
<keyword id="KW-0408">Iron</keyword>
<keyword id="KW-0411">Iron-sulfur</keyword>
<keyword id="KW-0479">Metal-binding</keyword>
<keyword id="KW-0489">Methyltransferase</keyword>
<keyword id="KW-0698">rRNA processing</keyword>
<keyword id="KW-0949">S-adenosyl-L-methionine</keyword>
<keyword id="KW-0808">Transferase</keyword>
<keyword id="KW-0819">tRNA processing</keyword>
<gene>
    <name evidence="1" type="primary">rlmN</name>
    <name type="ordered locus">CLH_1170</name>
</gene>
<reference key="1">
    <citation type="submission" date="2008-05" db="EMBL/GenBank/DDBJ databases">
        <title>Complete genome sequence of Clostridium botulinum E3 str. Alaska E43.</title>
        <authorList>
            <person name="Brinkac L.M."/>
            <person name="Brown J.L."/>
            <person name="Bruce D."/>
            <person name="Detter C."/>
            <person name="Munk C."/>
            <person name="Smith L.A."/>
            <person name="Smith T.J."/>
            <person name="Sutton G."/>
            <person name="Brettin T.S."/>
        </authorList>
    </citation>
    <scope>NUCLEOTIDE SEQUENCE [LARGE SCALE GENOMIC DNA]</scope>
    <source>
        <strain>Alaska E43 / Type E3</strain>
    </source>
</reference>
<comment type="function">
    <text evidence="1">Specifically methylates position 2 of adenine 2503 in 23S rRNA and position 2 of adenine 37 in tRNAs.</text>
</comment>
<comment type="catalytic activity">
    <reaction evidence="1">
        <text>adenosine(2503) in 23S rRNA + 2 reduced [2Fe-2S]-[ferredoxin] + 2 S-adenosyl-L-methionine = 2-methyladenosine(2503) in 23S rRNA + 5'-deoxyadenosine + L-methionine + 2 oxidized [2Fe-2S]-[ferredoxin] + S-adenosyl-L-homocysteine</text>
        <dbReference type="Rhea" id="RHEA:42916"/>
        <dbReference type="Rhea" id="RHEA-COMP:10000"/>
        <dbReference type="Rhea" id="RHEA-COMP:10001"/>
        <dbReference type="Rhea" id="RHEA-COMP:10152"/>
        <dbReference type="Rhea" id="RHEA-COMP:10282"/>
        <dbReference type="ChEBI" id="CHEBI:17319"/>
        <dbReference type="ChEBI" id="CHEBI:33737"/>
        <dbReference type="ChEBI" id="CHEBI:33738"/>
        <dbReference type="ChEBI" id="CHEBI:57844"/>
        <dbReference type="ChEBI" id="CHEBI:57856"/>
        <dbReference type="ChEBI" id="CHEBI:59789"/>
        <dbReference type="ChEBI" id="CHEBI:74411"/>
        <dbReference type="ChEBI" id="CHEBI:74497"/>
        <dbReference type="EC" id="2.1.1.192"/>
    </reaction>
</comment>
<comment type="catalytic activity">
    <reaction evidence="1">
        <text>adenosine(37) in tRNA + 2 reduced [2Fe-2S]-[ferredoxin] + 2 S-adenosyl-L-methionine = 2-methyladenosine(37) in tRNA + 5'-deoxyadenosine + L-methionine + 2 oxidized [2Fe-2S]-[ferredoxin] + S-adenosyl-L-homocysteine</text>
        <dbReference type="Rhea" id="RHEA:43332"/>
        <dbReference type="Rhea" id="RHEA-COMP:10000"/>
        <dbReference type="Rhea" id="RHEA-COMP:10001"/>
        <dbReference type="Rhea" id="RHEA-COMP:10162"/>
        <dbReference type="Rhea" id="RHEA-COMP:10485"/>
        <dbReference type="ChEBI" id="CHEBI:17319"/>
        <dbReference type="ChEBI" id="CHEBI:33737"/>
        <dbReference type="ChEBI" id="CHEBI:33738"/>
        <dbReference type="ChEBI" id="CHEBI:57844"/>
        <dbReference type="ChEBI" id="CHEBI:57856"/>
        <dbReference type="ChEBI" id="CHEBI:59789"/>
        <dbReference type="ChEBI" id="CHEBI:74411"/>
        <dbReference type="ChEBI" id="CHEBI:74497"/>
        <dbReference type="EC" id="2.1.1.192"/>
    </reaction>
</comment>
<comment type="cofactor">
    <cofactor evidence="1">
        <name>[4Fe-4S] cluster</name>
        <dbReference type="ChEBI" id="CHEBI:49883"/>
    </cofactor>
    <text evidence="1">Binds 1 [4Fe-4S] cluster. The cluster is coordinated with 3 cysteines and an exchangeable S-adenosyl-L-methionine.</text>
</comment>
<comment type="subcellular location">
    <subcellularLocation>
        <location evidence="1">Cytoplasm</location>
    </subcellularLocation>
</comment>
<comment type="miscellaneous">
    <text evidence="1">Reaction proceeds by a ping-pong mechanism involving intermediate methylation of a conserved cysteine residue.</text>
</comment>
<comment type="similarity">
    <text evidence="1">Belongs to the radical SAM superfamily. RlmN family.</text>
</comment>
<name>RLMN_CLOBA</name>